<proteinExistence type="inferred from homology"/>
<reference key="1">
    <citation type="journal article" date="2008" name="J. Bacteriol.">
        <title>Comparative genome sequence analysis of multidrug-resistant Acinetobacter baumannii.</title>
        <authorList>
            <person name="Adams M.D."/>
            <person name="Goglin K."/>
            <person name="Molyneaux N."/>
            <person name="Hujer K.M."/>
            <person name="Lavender H."/>
            <person name="Jamison J.J."/>
            <person name="MacDonald I.J."/>
            <person name="Martin K.M."/>
            <person name="Russo T."/>
            <person name="Campagnari A.A."/>
            <person name="Hujer A.M."/>
            <person name="Bonomo R.A."/>
            <person name="Gill S.R."/>
        </authorList>
    </citation>
    <scope>NUCLEOTIDE SEQUENCE [LARGE SCALE GENOMIC DNA]</scope>
    <source>
        <strain>AB0057</strain>
    </source>
</reference>
<gene>
    <name evidence="1" type="primary">dadA</name>
    <name type="ordered locus">AB57_0138</name>
</gene>
<keyword id="KW-0274">FAD</keyword>
<keyword id="KW-0285">Flavoprotein</keyword>
<keyword id="KW-0560">Oxidoreductase</keyword>
<evidence type="ECO:0000255" key="1">
    <source>
        <dbReference type="HAMAP-Rule" id="MF_01202"/>
    </source>
</evidence>
<sequence length="421" mass="46426">MRVIVLGSGVIGVASAYYLARQGAEVTVLDRQSGPAEETSFGNAGQISPGYSTPWAAPGIPFKAVKWMFQHHAPLAINLDGSMWQLQWMAQMLKNCNPQSYAVNKERMMRVAEYSRDCLRELRKDTGIHYENRAKGTLQLFRKEAQMEAVQRDISVLEECGVSYELLNGNELGRVEPALANAQDKLVGGLHLPNDETGDCYLFTNALAQIAKELGVNFQFNQNVEKLIVEGDQIKGVQVNGKVLTADRYVLAFGSYSRDFLKPLDLQLPVYPVKGYSLTIPIVDPAFAPQSTVLDETYKIAITRFDQRIRVGGMAELSGFNLGLNEDRRATLQMVTQDLFPGGDMAQASFWTGLRPMTPDSTPIIGATRFKNLFLNTGHGTLGWTMACGSGKLISDIVLNHKTDISTDGLSIQRYSHAHAA</sequence>
<dbReference type="EC" id="1.4.99.-" evidence="1"/>
<dbReference type="EMBL" id="CP001182">
    <property type="protein sequence ID" value="ACJ39569.1"/>
    <property type="molecule type" value="Genomic_DNA"/>
</dbReference>
<dbReference type="RefSeq" id="WP_001263980.1">
    <property type="nucleotide sequence ID" value="NC_011586.2"/>
</dbReference>
<dbReference type="SMR" id="B7I1Q9"/>
<dbReference type="KEGG" id="abn:AB57_0138"/>
<dbReference type="HOGENOM" id="CLU_007884_9_2_6"/>
<dbReference type="UniPathway" id="UPA00043">
    <property type="reaction ID" value="UER00498"/>
</dbReference>
<dbReference type="Proteomes" id="UP000007094">
    <property type="component" value="Chromosome"/>
</dbReference>
<dbReference type="GO" id="GO:0005737">
    <property type="term" value="C:cytoplasm"/>
    <property type="evidence" value="ECO:0007669"/>
    <property type="project" value="TreeGrafter"/>
</dbReference>
<dbReference type="GO" id="GO:0005886">
    <property type="term" value="C:plasma membrane"/>
    <property type="evidence" value="ECO:0007669"/>
    <property type="project" value="TreeGrafter"/>
</dbReference>
<dbReference type="GO" id="GO:0008718">
    <property type="term" value="F:D-amino-acid dehydrogenase activity"/>
    <property type="evidence" value="ECO:0007669"/>
    <property type="project" value="UniProtKB-UniRule"/>
</dbReference>
<dbReference type="GO" id="GO:0055130">
    <property type="term" value="P:D-alanine catabolic process"/>
    <property type="evidence" value="ECO:0007669"/>
    <property type="project" value="UniProtKB-UniPathway"/>
</dbReference>
<dbReference type="FunFam" id="3.50.50.60:FF:000020">
    <property type="entry name" value="D-amino acid dehydrogenase"/>
    <property type="match status" value="1"/>
</dbReference>
<dbReference type="Gene3D" id="3.30.9.10">
    <property type="entry name" value="D-Amino Acid Oxidase, subunit A, domain 2"/>
    <property type="match status" value="1"/>
</dbReference>
<dbReference type="Gene3D" id="3.50.50.60">
    <property type="entry name" value="FAD/NAD(P)-binding domain"/>
    <property type="match status" value="2"/>
</dbReference>
<dbReference type="HAMAP" id="MF_01202">
    <property type="entry name" value="DadA"/>
    <property type="match status" value="1"/>
</dbReference>
<dbReference type="InterPro" id="IPR023080">
    <property type="entry name" value="DadA"/>
</dbReference>
<dbReference type="InterPro" id="IPR006076">
    <property type="entry name" value="FAD-dep_OxRdtase"/>
</dbReference>
<dbReference type="InterPro" id="IPR036188">
    <property type="entry name" value="FAD/NAD-bd_sf"/>
</dbReference>
<dbReference type="NCBIfam" id="NF001933">
    <property type="entry name" value="PRK00711.1"/>
    <property type="match status" value="1"/>
</dbReference>
<dbReference type="PANTHER" id="PTHR13847:SF280">
    <property type="entry name" value="D-AMINO ACID DEHYDROGENASE"/>
    <property type="match status" value="1"/>
</dbReference>
<dbReference type="PANTHER" id="PTHR13847">
    <property type="entry name" value="SARCOSINE DEHYDROGENASE-RELATED"/>
    <property type="match status" value="1"/>
</dbReference>
<dbReference type="Pfam" id="PF01266">
    <property type="entry name" value="DAO"/>
    <property type="match status" value="1"/>
</dbReference>
<dbReference type="SUPFAM" id="SSF54373">
    <property type="entry name" value="FAD-linked reductases, C-terminal domain"/>
    <property type="match status" value="1"/>
</dbReference>
<dbReference type="SUPFAM" id="SSF51905">
    <property type="entry name" value="FAD/NAD(P)-binding domain"/>
    <property type="match status" value="1"/>
</dbReference>
<accession>B7I1Q9</accession>
<name>DADA_ACIB5</name>
<comment type="function">
    <text evidence="1">Oxidative deamination of D-amino acids.</text>
</comment>
<comment type="catalytic activity">
    <reaction evidence="1">
        <text>a D-alpha-amino acid + A + H2O = a 2-oxocarboxylate + AH2 + NH4(+)</text>
        <dbReference type="Rhea" id="RHEA:18125"/>
        <dbReference type="ChEBI" id="CHEBI:13193"/>
        <dbReference type="ChEBI" id="CHEBI:15377"/>
        <dbReference type="ChEBI" id="CHEBI:17499"/>
        <dbReference type="ChEBI" id="CHEBI:28938"/>
        <dbReference type="ChEBI" id="CHEBI:35179"/>
        <dbReference type="ChEBI" id="CHEBI:59871"/>
    </reaction>
</comment>
<comment type="cofactor">
    <cofactor evidence="1">
        <name>FAD</name>
        <dbReference type="ChEBI" id="CHEBI:57692"/>
    </cofactor>
</comment>
<comment type="pathway">
    <text>Amino-acid degradation; D-alanine degradation; NH(3) and pyruvate from D-alanine: step 1/1.</text>
</comment>
<comment type="similarity">
    <text evidence="1">Belongs to the DadA oxidoreductase family.</text>
</comment>
<protein>
    <recommendedName>
        <fullName evidence="1">D-amino acid dehydrogenase</fullName>
        <ecNumber evidence="1">1.4.99.-</ecNumber>
    </recommendedName>
</protein>
<feature type="chain" id="PRO_1000138635" description="D-amino acid dehydrogenase">
    <location>
        <begin position="1"/>
        <end position="421"/>
    </location>
</feature>
<feature type="binding site" evidence="1">
    <location>
        <begin position="3"/>
        <end position="17"/>
    </location>
    <ligand>
        <name>FAD</name>
        <dbReference type="ChEBI" id="CHEBI:57692"/>
    </ligand>
</feature>
<organism>
    <name type="scientific">Acinetobacter baumannii (strain AB0057)</name>
    <dbReference type="NCBI Taxonomy" id="480119"/>
    <lineage>
        <taxon>Bacteria</taxon>
        <taxon>Pseudomonadati</taxon>
        <taxon>Pseudomonadota</taxon>
        <taxon>Gammaproteobacteria</taxon>
        <taxon>Moraxellales</taxon>
        <taxon>Moraxellaceae</taxon>
        <taxon>Acinetobacter</taxon>
        <taxon>Acinetobacter calcoaceticus/baumannii complex</taxon>
    </lineage>
</organism>